<name>UVRB_RICTY</name>
<sequence length="662" mass="75715">MNNFSIISAYKPAGGQPKAIDEIIAGLNSKKRSQMLLGITGSGKTFTMANIIERTNRPTLIMAHNKTLAAQIYLEMKSIFPKNAVEYFVSYYDYYQPEAYIVRTDTFIEKDSSINEQIDLMRHSATRSLLERRDVIVIASVSCIYGLGAPDLYYQMTVHLELGQSYPRDKLLNDLINLQYKRNDIGFERGCFRVKGDHIDIFPSHYSDKAWRLSFFGNELEYIHEFDPLTGEKLTQLDKAMVFGNSHFVMPQKTINNAISSIEVELQKHLDVLKSQDKLIEAKRLNQRTQYDLEMLTETGSCKGIENYSRFFTGRNAGEPPPTLFEYLPKDALLFLDESHVSIPQIRAMYNSDRARKEVLVEHGFRLPSALDNRPLKFEEWEKFRPQTVFVSATPGPFELEETGGTVVELIIRPTGLLDPECIIKPATNQVEDLISEIQTTITKGLRILVTTLTKKMAEDLTSYLQDLQYKTYYLHSNIHTLERIEILRDLRQGNIDILVGINLLREGIDIPECGLVAILDADKEGFLRSEVSLIQTIGRAARNSRGKVILYADKMTKSIDKAVSETLRRRQIQQEYNKKYGIIPKTINSAIHTLESLEEIHDNKLDKKQTNTLLNNPAKLKSYMDKLKKEMFKAASNLEFEQAAKLRNQLKTLEKAVLELS</sequence>
<feature type="chain" id="PRO_0000227356" description="UvrABC system protein B">
    <location>
        <begin position="1"/>
        <end position="662"/>
    </location>
</feature>
<feature type="domain" description="Helicase ATP-binding" evidence="1">
    <location>
        <begin position="25"/>
        <end position="414"/>
    </location>
</feature>
<feature type="domain" description="Helicase C-terminal" evidence="1">
    <location>
        <begin position="430"/>
        <end position="592"/>
    </location>
</feature>
<feature type="domain" description="UVR" evidence="1">
    <location>
        <begin position="622"/>
        <end position="657"/>
    </location>
</feature>
<feature type="short sequence motif" description="Beta-hairpin">
    <location>
        <begin position="91"/>
        <end position="114"/>
    </location>
</feature>
<feature type="binding site" evidence="1">
    <location>
        <begin position="38"/>
        <end position="45"/>
    </location>
    <ligand>
        <name>ATP</name>
        <dbReference type="ChEBI" id="CHEBI:30616"/>
    </ligand>
</feature>
<accession>Q68XG5</accession>
<gene>
    <name evidence="1" type="primary">uvrB</name>
    <name type="ordered locus">RT0193</name>
</gene>
<protein>
    <recommendedName>
        <fullName evidence="1">UvrABC system protein B</fullName>
        <shortName evidence="1">Protein UvrB</shortName>
    </recommendedName>
    <alternativeName>
        <fullName evidence="1">Excinuclease ABC subunit B</fullName>
    </alternativeName>
</protein>
<keyword id="KW-0067">ATP-binding</keyword>
<keyword id="KW-0963">Cytoplasm</keyword>
<keyword id="KW-0227">DNA damage</keyword>
<keyword id="KW-0228">DNA excision</keyword>
<keyword id="KW-0234">DNA repair</keyword>
<keyword id="KW-0267">Excision nuclease</keyword>
<keyword id="KW-0547">Nucleotide-binding</keyword>
<keyword id="KW-0742">SOS response</keyword>
<organism>
    <name type="scientific">Rickettsia typhi (strain ATCC VR-144 / Wilmington)</name>
    <dbReference type="NCBI Taxonomy" id="257363"/>
    <lineage>
        <taxon>Bacteria</taxon>
        <taxon>Pseudomonadati</taxon>
        <taxon>Pseudomonadota</taxon>
        <taxon>Alphaproteobacteria</taxon>
        <taxon>Rickettsiales</taxon>
        <taxon>Rickettsiaceae</taxon>
        <taxon>Rickettsieae</taxon>
        <taxon>Rickettsia</taxon>
        <taxon>typhus group</taxon>
    </lineage>
</organism>
<dbReference type="EMBL" id="AE017197">
    <property type="protein sequence ID" value="AAU03677.1"/>
    <property type="molecule type" value="Genomic_DNA"/>
</dbReference>
<dbReference type="RefSeq" id="WP_011190664.1">
    <property type="nucleotide sequence ID" value="NC_006142.1"/>
</dbReference>
<dbReference type="SMR" id="Q68XG5"/>
<dbReference type="KEGG" id="rty:RT0193"/>
<dbReference type="eggNOG" id="COG0556">
    <property type="taxonomic scope" value="Bacteria"/>
</dbReference>
<dbReference type="HOGENOM" id="CLU_009621_2_1_5"/>
<dbReference type="OrthoDB" id="9806651at2"/>
<dbReference type="Proteomes" id="UP000000604">
    <property type="component" value="Chromosome"/>
</dbReference>
<dbReference type="GO" id="GO:0005737">
    <property type="term" value="C:cytoplasm"/>
    <property type="evidence" value="ECO:0007669"/>
    <property type="project" value="UniProtKB-SubCell"/>
</dbReference>
<dbReference type="GO" id="GO:0009380">
    <property type="term" value="C:excinuclease repair complex"/>
    <property type="evidence" value="ECO:0007669"/>
    <property type="project" value="InterPro"/>
</dbReference>
<dbReference type="GO" id="GO:0005524">
    <property type="term" value="F:ATP binding"/>
    <property type="evidence" value="ECO:0007669"/>
    <property type="project" value="UniProtKB-UniRule"/>
</dbReference>
<dbReference type="GO" id="GO:0016887">
    <property type="term" value="F:ATP hydrolysis activity"/>
    <property type="evidence" value="ECO:0007669"/>
    <property type="project" value="InterPro"/>
</dbReference>
<dbReference type="GO" id="GO:0003677">
    <property type="term" value="F:DNA binding"/>
    <property type="evidence" value="ECO:0007669"/>
    <property type="project" value="UniProtKB-UniRule"/>
</dbReference>
<dbReference type="GO" id="GO:0009381">
    <property type="term" value="F:excinuclease ABC activity"/>
    <property type="evidence" value="ECO:0007669"/>
    <property type="project" value="UniProtKB-UniRule"/>
</dbReference>
<dbReference type="GO" id="GO:0006289">
    <property type="term" value="P:nucleotide-excision repair"/>
    <property type="evidence" value="ECO:0007669"/>
    <property type="project" value="UniProtKB-UniRule"/>
</dbReference>
<dbReference type="GO" id="GO:0009432">
    <property type="term" value="P:SOS response"/>
    <property type="evidence" value="ECO:0007669"/>
    <property type="project" value="UniProtKB-UniRule"/>
</dbReference>
<dbReference type="CDD" id="cd17916">
    <property type="entry name" value="DEXHc_UvrB"/>
    <property type="match status" value="1"/>
</dbReference>
<dbReference type="CDD" id="cd18790">
    <property type="entry name" value="SF2_C_UvrB"/>
    <property type="match status" value="1"/>
</dbReference>
<dbReference type="Gene3D" id="3.40.50.300">
    <property type="entry name" value="P-loop containing nucleotide triphosphate hydrolases"/>
    <property type="match status" value="3"/>
</dbReference>
<dbReference type="Gene3D" id="4.10.860.10">
    <property type="entry name" value="UVR domain"/>
    <property type="match status" value="1"/>
</dbReference>
<dbReference type="HAMAP" id="MF_00204">
    <property type="entry name" value="UvrB"/>
    <property type="match status" value="1"/>
</dbReference>
<dbReference type="InterPro" id="IPR006935">
    <property type="entry name" value="Helicase/UvrB_N"/>
</dbReference>
<dbReference type="InterPro" id="IPR014001">
    <property type="entry name" value="Helicase_ATP-bd"/>
</dbReference>
<dbReference type="InterPro" id="IPR001650">
    <property type="entry name" value="Helicase_C-like"/>
</dbReference>
<dbReference type="InterPro" id="IPR027417">
    <property type="entry name" value="P-loop_NTPase"/>
</dbReference>
<dbReference type="InterPro" id="IPR001943">
    <property type="entry name" value="UVR_dom"/>
</dbReference>
<dbReference type="InterPro" id="IPR036876">
    <property type="entry name" value="UVR_dom_sf"/>
</dbReference>
<dbReference type="InterPro" id="IPR004807">
    <property type="entry name" value="UvrB"/>
</dbReference>
<dbReference type="InterPro" id="IPR041471">
    <property type="entry name" value="UvrB_inter"/>
</dbReference>
<dbReference type="InterPro" id="IPR024759">
    <property type="entry name" value="UvrB_YAD/RRR_dom"/>
</dbReference>
<dbReference type="NCBIfam" id="NF003673">
    <property type="entry name" value="PRK05298.1"/>
    <property type="match status" value="1"/>
</dbReference>
<dbReference type="NCBIfam" id="TIGR00631">
    <property type="entry name" value="uvrb"/>
    <property type="match status" value="1"/>
</dbReference>
<dbReference type="PANTHER" id="PTHR24029">
    <property type="entry name" value="UVRABC SYSTEM PROTEIN B"/>
    <property type="match status" value="1"/>
</dbReference>
<dbReference type="PANTHER" id="PTHR24029:SF0">
    <property type="entry name" value="UVRABC SYSTEM PROTEIN B"/>
    <property type="match status" value="1"/>
</dbReference>
<dbReference type="Pfam" id="PF00271">
    <property type="entry name" value="Helicase_C"/>
    <property type="match status" value="1"/>
</dbReference>
<dbReference type="Pfam" id="PF04851">
    <property type="entry name" value="ResIII"/>
    <property type="match status" value="1"/>
</dbReference>
<dbReference type="Pfam" id="PF02151">
    <property type="entry name" value="UVR"/>
    <property type="match status" value="1"/>
</dbReference>
<dbReference type="Pfam" id="PF12344">
    <property type="entry name" value="UvrB"/>
    <property type="match status" value="1"/>
</dbReference>
<dbReference type="Pfam" id="PF17757">
    <property type="entry name" value="UvrB_inter"/>
    <property type="match status" value="1"/>
</dbReference>
<dbReference type="SMART" id="SM00487">
    <property type="entry name" value="DEXDc"/>
    <property type="match status" value="1"/>
</dbReference>
<dbReference type="SMART" id="SM00490">
    <property type="entry name" value="HELICc"/>
    <property type="match status" value="1"/>
</dbReference>
<dbReference type="SUPFAM" id="SSF46600">
    <property type="entry name" value="C-terminal UvrC-binding domain of UvrB"/>
    <property type="match status" value="1"/>
</dbReference>
<dbReference type="SUPFAM" id="SSF52540">
    <property type="entry name" value="P-loop containing nucleoside triphosphate hydrolases"/>
    <property type="match status" value="2"/>
</dbReference>
<dbReference type="PROSITE" id="PS51192">
    <property type="entry name" value="HELICASE_ATP_BIND_1"/>
    <property type="match status" value="1"/>
</dbReference>
<dbReference type="PROSITE" id="PS51194">
    <property type="entry name" value="HELICASE_CTER"/>
    <property type="match status" value="1"/>
</dbReference>
<dbReference type="PROSITE" id="PS50151">
    <property type="entry name" value="UVR"/>
    <property type="match status" value="1"/>
</dbReference>
<reference key="1">
    <citation type="journal article" date="2004" name="J. Bacteriol.">
        <title>Complete genome sequence of Rickettsia typhi and comparison with sequences of other Rickettsiae.</title>
        <authorList>
            <person name="McLeod M.P."/>
            <person name="Qin X."/>
            <person name="Karpathy S.E."/>
            <person name="Gioia J."/>
            <person name="Highlander S.K."/>
            <person name="Fox G.E."/>
            <person name="McNeill T.Z."/>
            <person name="Jiang H."/>
            <person name="Muzny D."/>
            <person name="Jacob L.S."/>
            <person name="Hawes A.C."/>
            <person name="Sodergren E."/>
            <person name="Gill R."/>
            <person name="Hume J."/>
            <person name="Morgan M."/>
            <person name="Fan G."/>
            <person name="Amin A.G."/>
            <person name="Gibbs R.A."/>
            <person name="Hong C."/>
            <person name="Yu X.-J."/>
            <person name="Walker D.H."/>
            <person name="Weinstock G.M."/>
        </authorList>
    </citation>
    <scope>NUCLEOTIDE SEQUENCE [LARGE SCALE GENOMIC DNA]</scope>
    <source>
        <strain>ATCC VR-144 / Wilmington</strain>
    </source>
</reference>
<evidence type="ECO:0000255" key="1">
    <source>
        <dbReference type="HAMAP-Rule" id="MF_00204"/>
    </source>
</evidence>
<proteinExistence type="inferred from homology"/>
<comment type="function">
    <text evidence="1">The UvrABC repair system catalyzes the recognition and processing of DNA lesions. A damage recognition complex composed of 2 UvrA and 2 UvrB subunits scans DNA for abnormalities. Upon binding of the UvrA(2)B(2) complex to a putative damaged site, the DNA wraps around one UvrB monomer. DNA wrap is dependent on ATP binding by UvrB and probably causes local melting of the DNA helix, facilitating insertion of UvrB beta-hairpin between the DNA strands. Then UvrB probes one DNA strand for the presence of a lesion. If a lesion is found the UvrA subunits dissociate and the UvrB-DNA preincision complex is formed. This complex is subsequently bound by UvrC and the second UvrB is released. If no lesion is found, the DNA wraps around the other UvrB subunit that will check the other stand for damage.</text>
</comment>
<comment type="subunit">
    <text evidence="1">Forms a heterotetramer with UvrA during the search for lesions. Interacts with UvrC in an incision complex.</text>
</comment>
<comment type="subcellular location">
    <subcellularLocation>
        <location evidence="1">Cytoplasm</location>
    </subcellularLocation>
</comment>
<comment type="domain">
    <text evidence="1">The beta-hairpin motif is involved in DNA binding.</text>
</comment>
<comment type="similarity">
    <text evidence="1">Belongs to the UvrB family.</text>
</comment>